<proteinExistence type="evidence at protein level"/>
<sequence>MANVQVAVRVRPLSKRETKEGGRIIVEVDDKVAKIRNVKVDSRPESFGDTREKVVAFGFDYCYWSVNPEDPHYASQEVVFRDLGTEVLSGAAKGYNICLFAYGQTGSGKTYTMLGTPASVGLTPRICEGLFIREDDCASQPCSRSIKVSFLEIYNERVRDLLKQSNQNKSYTLRVREHPEMGPYVQGLSQHVVTNYQQVIQLLEAGIANRITAATHVHEASSRSHAIFTIHCTQAILQNNLPSETASKINLVDLAGSERADPSYCKDRITEGANINKSLVTLGIVISTLAQNSQVFSSCQSLSSAASSGGDSGVPSTTSGASSGGGPARRQSYIPYRDSVLTWLLKESLGGNSKTIMVATVSPAHTSYSETMSTMRYASNAKNIINKPRVNEDANVKLIRELREEIERLKAVLLNFELIDTLTQHWTEKRNDRQALMEHYGVDINRKRARVVIDSSLPHLMALEDDVLSTGVVLYHLKEGTTKIGRIDSDQEQDIVLQGQWIERDHCTITSTCGVVILRPTQGARCTVNGREVTASCRLTQGAVITLGKAQKFRFNHPAEAAVLRHQRLKVGEALGSSGSLEWLDLDGDVSASRLGLCPVLRKERRVLEEQCDRDQQPSRHSEIPYRAQPEQQQCHVEALKQQAKEGQSRVQKELELDHTHISQQIKDNQQWLLTEETWLASLRETQQEGNCGEEKELEASVAPDAWLPTVPQTPPSPLVQSQKRVVQPQCSPRHTTRATVWNIRQKKVSFQLERIIKKRRLLEAQRRLEQLSTFFWIQDDGASRAPSWASSSNTSGPGSQRRSRWTTCSSLSLQRLGCRRLPQLHSDFMNWDPSAMSPPVPELTHQMPEKTLSTDCIPPKAGRLGRNSFHSSRWRKFSPARRASTQGTHLTVSHKSVSSQEIESLGKQPCQMSSQGQSTKKQKARDGSRTFIPAAQTRWASVNTKTGWQKEGTCGTYKDPKETTSQSTDLSGLEPAAGHRKVVKTFQAESKPSPSSRASKKHQRVLAARARDIVKTFSRLPHGGPLKNQPRAGDPGTPASFTDSRPIKDPVREEDRDLSDTESSYSVDSLSYIYAKVPKKLLKPEDLQGKWNLPDSENSESDNSQISEDSLAGKGHKSLPENSRGEYSMKDHGHSRARTSASVRGLPMPSDSSLCTQKYRSFSLDSLIDPENRQGEPFLGSADEMPTETFWHLQNATPSSVDQEAMDRPSPTNHRMGVGVNVLLPKSNSFYLDPQFQPPCEQLESEMEASYSEHTNPLRGLQLARESPLLSVDSWFSCDSKVSPSSPSGDIHSLCPSPDIHEIQPHDEKPKHWLSIEEPKPPGTCKLPQSSTEPPCSSDLYATSASDTSKPSVCESQGLLQPGDGGFFQGREMPDMTNQGISEESHNSDMSSVLAPSATSFTQVCSVNKDWAALHQEYLLELSDSGFEAVGEPRPAFPFLEEDSSSLAEASDKVDTQLPTGPGLPRNLDFSSFPVHISKIGHLRAEKDHDSLSAKVESASDLLSTVERMSSNGTYPADIESLTSGSINAQPYTAGNVIPSSMTEAWEVHRASLEGCLQGDRHSVLITSSGQKRAYHNDDTLATEGDCLPQDGALLGKNTKVQPGLLSHNSYQQPLLEEKAASQQCTDGEVAGTRIDACCAFPSGPELFLHSTPWSSSPSSLQPPPLETFYVTKSRDALTETALEIPACREAWVPSPPPREAWGFDHSHQVSQKAHWKNNLPKLSQSQNSKIDSPQQTTTKRPTDLDTGEGTEELGKHSRNMREEENHDSAYSFVAQNRQHLPSTRLKVCECGNQLGILNKEYSLSVHQDEEGASAWHHGSVAFNGSEPKTLLFICDSKASGEEQSLLLPQIQSCGMHSQSPGARSDFIGKIANLDPEKVIPEEAAVSLKSRSLHCLSSPVIVAGGRSPTRRREGRNETGLLREVISKDIQEEFSLPGTQYICERCHLLLCSRERKPTECKAHGQSQEVQSKEEPLEEKQNKRVNNIDEMARLMRSVMQLETGILEIESKHNKHLHASHMPSTELMLQDLEDQEKADHVPTPESSGEHLCFEDQPSFPIQIKDDIFEDSKAREIEVTNATSNNNTQIQKLTGSPFRSREYVQTRESESEHSYPPPGADRLARDTCDSLGKGTALRKPSNISLHSRTMRGLARALPLQPSIERPKKDNELLKASAKFQGQTWALESLEELESMERFQESQIVVVPSGSELEDAKTQGGVEEMTVDRRGSLQEKEDMVSSTQKVPTPSQHWKGTFFSQEAVSPFYYQTGFSAALPHGELSGTQPVHSLSFPRSGLHGSDTKGVSSFEYILEPVMLKTNRNSLATGVGDQDHSGETRSSSPQERASGDVSTTHTPLGGSVMPVVVRASGQAVTSDSTLLNTEDWITVSTSSQEDQEGDFRDTSTGSTTQEALGSEAEATVQKERKNSSLDRISRQAEKRVSFLLQEDSNQGEEERQKAEETSEDQQLPNSAYLTPISELKGPDAEPLLLPDSSINASICLGILAEIRQAKTQRKQLTDLVAEGTVLPYETLQEAEWFSEAAGKPQTQKVKLGWGSTRNDAKAQRLHEASPSAVSADLLADERKAQVSAGSFHHLPNPETDRGPQHHLLASPHIVSELEKRYCTGKPRQFCGASGRSDSSEVIEKRKEASRTKSSVDPLPSDRLLSIPAVEQDGGLGSEKVSVLPSQTSYAPGRILHGQGQLTARETVKGLSFGGKDSILGHQEPRSLDSTHGGGSEKISVTTQKENAVFSECPSVICTVDNAVDLSQSKQDHVQGLDASTGLEETKASPKSGAVHPEAPGNVGAEANIRHPVKWKNVDSGLACGGDSKNPWSTPFLDQRPSLHPSGVREEAPGPCPKECLVFERNTGGSRPLGSSYEEAENRTIPCPHLSGSQPTTAVHACCSHSSTLLCCRDGVLRKGTPWAAAPPDHSLCIVPSTVCEVDGTGECLSRVSLAHDLKHKCGPVDNSIPNPPTTTPVSSPAQNCSCLSTSEMRARCLTHTFARGRSVEGSGEETTGKKVTTAPEDTFPSSPAGMSSEPLRTLKNNSVDENGQASQTMPEPPAVTQGPGTLNSNECVDSKLVIAAQFGHLENTKCCSEKMQPSTKVRGHSCLAPQARFVDMLKPTCHPKIETSWEEEEQQRDQVSGDGKDHAQVRNLVPSNVGGFDGYQTRDGETKSSVPQTFFSDFEAQTEPSQPAAQTHSQHCSDREQLPRSHRHLLPVIAIFSGPKHARYSPRPQFTVVSSSRSLQELNLSVEPPSPTDEDAQRPDSSWRPHLRGYSSEKPISTSLKTQDCSQKALCNLNNSSSNHRPLNPVIPPYPTSSTVSCMPTPEFMTTWMPGALEQAHQGKTDKLSVQGMPENWHSQTDEEMLHFGSSELSPSVLSSCPQGLVHIGWKQYVFGSAVDVSCSQKPQCLIQSNMAQCSSIDNVLEDKKSPFHSHPKTDAQTQDLPNIHSDVENDQSSNELPLVGGSATAQVDEILLLCPPEMGCAGGEASVNTFEQGTQALGSRRHWCCTDVSLQPEARTMSDSELASWTSMHNLSVHLSQLLHSTSELLGSLSHPGVVIKEQNVKRDSLDEAQQALRMDGSASTTVDEGIQTDLALPPLAFQGPEVKSEEVSVILDMMDSGITTVAQEKGDVPVVFQKREAEGAAETPGLHEESTHNKLQSPPLPSPHLRVQKADLGQNFTFMSPPASPDGSPPPSLRPEESCMVVNMPRFSPHSGLSLGAFESTQEPRTQKRLCGSRAVLVDRASSPILTFSASIQELSNPLACVTLSAPSVHPLEDFQKLDDINSDLAVGDPRPPVDNSQATDESGDSQRAESLDREGKSPLGKSSERLLLDNSSSCSPQQSSSLQVSFLGIAPQQLQPKTTTGDQSKLPSPPPRHKNPKLDDSCVSEKVTSVEHGPLRPSQWQGRTTNKDWGSEFMVEPQPNLDQPSSRRGLQPLSPCQISDTTGLQSPAVDPPQACHPVGLLCSGSHMHVAPGPQHYNLRDLPVHNNFNNLYGVQGGPGRGLHEGESLGVRCDSSSVGTHRPPQLSDKYSQNLEWLRLEHIPLQAGVQKLALSVELTEAKLHHGFGETDALLKVLQSGTGEVLAPQEPAVPSSEEFYTRQKKTIETLRRQRAERLHNFRRTRSLSPQKQLGLLPSKDLPTWELDLPSRRQEYLQQLRKHIVDTTRIPEPAPGLARPPSDIELMLQEYRRAREEAKVEIAQARDRLKERTEQEKMRIRQQIISQLLKEEEKLQTLANFSSLYTSSNGSISSGVTSGYNSSPAFSGHLQSLEVSGDSQVPDSQDTWIGDWQDQSTVRNSYLYLTGSSWKSLAHSRRASMGSGCCSASSLSSLGACFSFPYQDLAKHIVSTSMADVMAACSDNLHNLFIRQATDGWNYQGEEQEVQLYYKEFSSTRHGFLGASVVSQPLSQVWAAVSDPTLWPLYHKPIQTARLHQRVTNSISLVYLVCNTTLCELKQLRDFCCVCVEAKEGCLSIMAAQSVYDASMPRPSRKMVRGEILPSAWVLQPVIIEGKEITRVISLVQVELGAPGFPPHLLNSCIKQQPLVVAKLASFLRS</sequence>
<keyword id="KW-0067">ATP-binding</keyword>
<keyword id="KW-0175">Coiled coil</keyword>
<keyword id="KW-0963">Cytoplasm</keyword>
<keyword id="KW-0206">Cytoskeleton</keyword>
<keyword id="KW-0505">Motor protein</keyword>
<keyword id="KW-0547">Nucleotide-binding</keyword>
<keyword id="KW-0539">Nucleus</keyword>
<keyword id="KW-0597">Phosphoprotein</keyword>
<keyword id="KW-1185">Reference proteome</keyword>
<name>STAR9_MOUSE</name>
<comment type="function">
    <text evidence="1">Microtubule-dependent motor protein required for spindle pole assembly during mitosis. Required to stabilize the pericentriolar material (PCM) (By similarity).</text>
</comment>
<comment type="subunit">
    <text evidence="1">Interacts with ATAD3A.</text>
</comment>
<comment type="subcellular location">
    <subcellularLocation>
        <location evidence="1">Cytoplasm</location>
        <location evidence="1">Cytoskeleton</location>
        <location evidence="1">Microtubule organizing center</location>
        <location evidence="1">Centrosome</location>
        <location evidence="1">Centriole</location>
    </subcellularLocation>
    <subcellularLocation>
        <location evidence="1">Nucleus</location>
    </subcellularLocation>
    <text evidence="1">Localizes throughout the cytoplasm and nucleus during interphase. Localizes to the daughter centriole during mitosis. Disappears in cytokinesis (By similarity).</text>
</comment>
<comment type="similarity">
    <text evidence="5">Belongs to the TRAFAC class myosin-kinesin ATPase superfamily. Kinesin family.</text>
</comment>
<reference key="1">
    <citation type="journal article" date="2009" name="PLoS Biol.">
        <title>Lineage-specific biology revealed by a finished genome assembly of the mouse.</title>
        <authorList>
            <person name="Church D.M."/>
            <person name="Goodstadt L."/>
            <person name="Hillier L.W."/>
            <person name="Zody M.C."/>
            <person name="Goldstein S."/>
            <person name="She X."/>
            <person name="Bult C.J."/>
            <person name="Agarwala R."/>
            <person name="Cherry J.L."/>
            <person name="DiCuccio M."/>
            <person name="Hlavina W."/>
            <person name="Kapustin Y."/>
            <person name="Meric P."/>
            <person name="Maglott D."/>
            <person name="Birtle Z."/>
            <person name="Marques A.C."/>
            <person name="Graves T."/>
            <person name="Zhou S."/>
            <person name="Teague B."/>
            <person name="Potamousis K."/>
            <person name="Churas C."/>
            <person name="Place M."/>
            <person name="Herschleb J."/>
            <person name="Runnheim R."/>
            <person name="Forrest D."/>
            <person name="Amos-Landgraf J."/>
            <person name="Schwartz D.C."/>
            <person name="Cheng Z."/>
            <person name="Lindblad-Toh K."/>
            <person name="Eichler E.E."/>
            <person name="Ponting C.P."/>
        </authorList>
    </citation>
    <scope>NUCLEOTIDE SEQUENCE [LARGE SCALE GENOMIC DNA]</scope>
    <source>
        <strain>C57BL/6J</strain>
    </source>
</reference>
<reference key="2">
    <citation type="journal article" date="1997" name="Proc. Natl. Acad. Sci. U.S.A.">
        <title>Identification and classification of 16 new kinesin superfamily (KIF) proteins in mouse genome.</title>
        <authorList>
            <person name="Nakagawa T."/>
            <person name="Tanaka Y."/>
            <person name="Matsuoka E."/>
            <person name="Kondo S."/>
            <person name="Okada Y."/>
            <person name="Noda Y."/>
            <person name="Kanai Y."/>
            <person name="Hirokawa N."/>
        </authorList>
    </citation>
    <scope>NUCLEOTIDE SEQUENCE [MRNA] OF 99-258</scope>
    <source>
        <strain>ICR</strain>
    </source>
</reference>
<reference key="3">
    <citation type="journal article" date="2003" name="DNA Res.">
        <title>Prediction of the coding sequences of mouse homologues of KIAA gene: II. The complete nucleotide sequences of 400 mouse KIAA-homologous cDNAs identified by screening of terminal sequences of cDNA clones randomly sampled from size-fractionated libraries.</title>
        <authorList>
            <person name="Okazaki N."/>
            <person name="Kikuno R."/>
            <person name="Ohara R."/>
            <person name="Inamoto S."/>
            <person name="Aizawa H."/>
            <person name="Yuasa S."/>
            <person name="Nakajima D."/>
            <person name="Nagase T."/>
            <person name="Ohara O."/>
            <person name="Koga H."/>
        </authorList>
    </citation>
    <scope>NUCLEOTIDE SEQUENCE [LARGE SCALE MRNA] OF 3094-4561</scope>
    <source>
        <tissue>Brain</tissue>
    </source>
</reference>
<reference key="4">
    <citation type="journal article" date="2005" name="Science">
        <title>The transcriptional landscape of the mammalian genome.</title>
        <authorList>
            <person name="Carninci P."/>
            <person name="Kasukawa T."/>
            <person name="Katayama S."/>
            <person name="Gough J."/>
            <person name="Frith M.C."/>
            <person name="Maeda N."/>
            <person name="Oyama R."/>
            <person name="Ravasi T."/>
            <person name="Lenhard B."/>
            <person name="Wells C."/>
            <person name="Kodzius R."/>
            <person name="Shimokawa K."/>
            <person name="Bajic V.B."/>
            <person name="Brenner S.E."/>
            <person name="Batalov S."/>
            <person name="Forrest A.R."/>
            <person name="Zavolan M."/>
            <person name="Davis M.J."/>
            <person name="Wilming L.G."/>
            <person name="Aidinis V."/>
            <person name="Allen J.E."/>
            <person name="Ambesi-Impiombato A."/>
            <person name="Apweiler R."/>
            <person name="Aturaliya R.N."/>
            <person name="Bailey T.L."/>
            <person name="Bansal M."/>
            <person name="Baxter L."/>
            <person name="Beisel K.W."/>
            <person name="Bersano T."/>
            <person name="Bono H."/>
            <person name="Chalk A.M."/>
            <person name="Chiu K.P."/>
            <person name="Choudhary V."/>
            <person name="Christoffels A."/>
            <person name="Clutterbuck D.R."/>
            <person name="Crowe M.L."/>
            <person name="Dalla E."/>
            <person name="Dalrymple B.P."/>
            <person name="de Bono B."/>
            <person name="Della Gatta G."/>
            <person name="di Bernardo D."/>
            <person name="Down T."/>
            <person name="Engstrom P."/>
            <person name="Fagiolini M."/>
            <person name="Faulkner G."/>
            <person name="Fletcher C.F."/>
            <person name="Fukushima T."/>
            <person name="Furuno M."/>
            <person name="Futaki S."/>
            <person name="Gariboldi M."/>
            <person name="Georgii-Hemming P."/>
            <person name="Gingeras T.R."/>
            <person name="Gojobori T."/>
            <person name="Green R.E."/>
            <person name="Gustincich S."/>
            <person name="Harbers M."/>
            <person name="Hayashi Y."/>
            <person name="Hensch T.K."/>
            <person name="Hirokawa N."/>
            <person name="Hill D."/>
            <person name="Huminiecki L."/>
            <person name="Iacono M."/>
            <person name="Ikeo K."/>
            <person name="Iwama A."/>
            <person name="Ishikawa T."/>
            <person name="Jakt M."/>
            <person name="Kanapin A."/>
            <person name="Katoh M."/>
            <person name="Kawasawa Y."/>
            <person name="Kelso J."/>
            <person name="Kitamura H."/>
            <person name="Kitano H."/>
            <person name="Kollias G."/>
            <person name="Krishnan S.P."/>
            <person name="Kruger A."/>
            <person name="Kummerfeld S.K."/>
            <person name="Kurochkin I.V."/>
            <person name="Lareau L.F."/>
            <person name="Lazarevic D."/>
            <person name="Lipovich L."/>
            <person name="Liu J."/>
            <person name="Liuni S."/>
            <person name="McWilliam S."/>
            <person name="Madan Babu M."/>
            <person name="Madera M."/>
            <person name="Marchionni L."/>
            <person name="Matsuda H."/>
            <person name="Matsuzawa S."/>
            <person name="Miki H."/>
            <person name="Mignone F."/>
            <person name="Miyake S."/>
            <person name="Morris K."/>
            <person name="Mottagui-Tabar S."/>
            <person name="Mulder N."/>
            <person name="Nakano N."/>
            <person name="Nakauchi H."/>
            <person name="Ng P."/>
            <person name="Nilsson R."/>
            <person name="Nishiguchi S."/>
            <person name="Nishikawa S."/>
            <person name="Nori F."/>
            <person name="Ohara O."/>
            <person name="Okazaki Y."/>
            <person name="Orlando V."/>
            <person name="Pang K.C."/>
            <person name="Pavan W.J."/>
            <person name="Pavesi G."/>
            <person name="Pesole G."/>
            <person name="Petrovsky N."/>
            <person name="Piazza S."/>
            <person name="Reed J."/>
            <person name="Reid J.F."/>
            <person name="Ring B.Z."/>
            <person name="Ringwald M."/>
            <person name="Rost B."/>
            <person name="Ruan Y."/>
            <person name="Salzberg S.L."/>
            <person name="Sandelin A."/>
            <person name="Schneider C."/>
            <person name="Schoenbach C."/>
            <person name="Sekiguchi K."/>
            <person name="Semple C.A."/>
            <person name="Seno S."/>
            <person name="Sessa L."/>
            <person name="Sheng Y."/>
            <person name="Shibata Y."/>
            <person name="Shimada H."/>
            <person name="Shimada K."/>
            <person name="Silva D."/>
            <person name="Sinclair B."/>
            <person name="Sperling S."/>
            <person name="Stupka E."/>
            <person name="Sugiura K."/>
            <person name="Sultana R."/>
            <person name="Takenaka Y."/>
            <person name="Taki K."/>
            <person name="Tammoja K."/>
            <person name="Tan S.L."/>
            <person name="Tang S."/>
            <person name="Taylor M.S."/>
            <person name="Tegner J."/>
            <person name="Teichmann S.A."/>
            <person name="Ueda H.R."/>
            <person name="van Nimwegen E."/>
            <person name="Verardo R."/>
            <person name="Wei C.L."/>
            <person name="Yagi K."/>
            <person name="Yamanishi H."/>
            <person name="Zabarovsky E."/>
            <person name="Zhu S."/>
            <person name="Zimmer A."/>
            <person name="Hide W."/>
            <person name="Bult C."/>
            <person name="Grimmond S.M."/>
            <person name="Teasdale R.D."/>
            <person name="Liu E.T."/>
            <person name="Brusic V."/>
            <person name="Quackenbush J."/>
            <person name="Wahlestedt C."/>
            <person name="Mattick J.S."/>
            <person name="Hume D.A."/>
            <person name="Kai C."/>
            <person name="Sasaki D."/>
            <person name="Tomaru Y."/>
            <person name="Fukuda S."/>
            <person name="Kanamori-Katayama M."/>
            <person name="Suzuki M."/>
            <person name="Aoki J."/>
            <person name="Arakawa T."/>
            <person name="Iida J."/>
            <person name="Imamura K."/>
            <person name="Itoh M."/>
            <person name="Kato T."/>
            <person name="Kawaji H."/>
            <person name="Kawagashira N."/>
            <person name="Kawashima T."/>
            <person name="Kojima M."/>
            <person name="Kondo S."/>
            <person name="Konno H."/>
            <person name="Nakano K."/>
            <person name="Ninomiya N."/>
            <person name="Nishio T."/>
            <person name="Okada M."/>
            <person name="Plessy C."/>
            <person name="Shibata K."/>
            <person name="Shiraki T."/>
            <person name="Suzuki S."/>
            <person name="Tagami M."/>
            <person name="Waki K."/>
            <person name="Watahiki A."/>
            <person name="Okamura-Oho Y."/>
            <person name="Suzuki H."/>
            <person name="Kawai J."/>
            <person name="Hayashizaki Y."/>
        </authorList>
    </citation>
    <scope>NUCLEOTIDE SEQUENCE [LARGE SCALE MRNA] OF 3922-4561</scope>
    <source>
        <strain>C57BL/6J</strain>
        <tissue>Head</tissue>
    </source>
</reference>
<reference key="5">
    <citation type="journal article" date="2004" name="Genome Res.">
        <title>The status, quality, and expansion of the NIH full-length cDNA project: the Mammalian Gene Collection (MGC).</title>
        <authorList>
            <consortium name="The MGC Project Team"/>
        </authorList>
    </citation>
    <scope>NUCLEOTIDE SEQUENCE [LARGE SCALE MRNA] OF 4191-4561</scope>
    <source>
        <strain>C57BL/6J</strain>
        <tissue>Thymus</tissue>
    </source>
</reference>
<reference key="6">
    <citation type="journal article" date="2010" name="Cell">
        <title>A tissue-specific atlas of mouse protein phosphorylation and expression.</title>
        <authorList>
            <person name="Huttlin E.L."/>
            <person name="Jedrychowski M.P."/>
            <person name="Elias J.E."/>
            <person name="Goswami T."/>
            <person name="Rad R."/>
            <person name="Beausoleil S.A."/>
            <person name="Villen J."/>
            <person name="Haas W."/>
            <person name="Sowa M.E."/>
            <person name="Gygi S.P."/>
        </authorList>
    </citation>
    <scope>PHOSPHORYLATION [LARGE SCALE ANALYSIS] AT SER-1164</scope>
    <scope>IDENTIFICATION BY MASS SPECTROMETRY [LARGE SCALE ANALYSIS]</scope>
    <source>
        <tissue>Lung</tissue>
    </source>
</reference>
<evidence type="ECO:0000250" key="1"/>
<evidence type="ECO:0000255" key="2"/>
<evidence type="ECO:0000255" key="3">
    <source>
        <dbReference type="PROSITE-ProRule" id="PRU00086"/>
    </source>
</evidence>
<evidence type="ECO:0000255" key="4">
    <source>
        <dbReference type="PROSITE-ProRule" id="PRU00197"/>
    </source>
</evidence>
<evidence type="ECO:0000255" key="5">
    <source>
        <dbReference type="PROSITE-ProRule" id="PRU00283"/>
    </source>
</evidence>
<evidence type="ECO:0000256" key="6">
    <source>
        <dbReference type="SAM" id="MobiDB-lite"/>
    </source>
</evidence>
<evidence type="ECO:0000305" key="7"/>
<evidence type="ECO:0007744" key="8">
    <source>
    </source>
</evidence>
<organism>
    <name type="scientific">Mus musculus</name>
    <name type="common">Mouse</name>
    <dbReference type="NCBI Taxonomy" id="10090"/>
    <lineage>
        <taxon>Eukaryota</taxon>
        <taxon>Metazoa</taxon>
        <taxon>Chordata</taxon>
        <taxon>Craniata</taxon>
        <taxon>Vertebrata</taxon>
        <taxon>Euteleostomi</taxon>
        <taxon>Mammalia</taxon>
        <taxon>Eutheria</taxon>
        <taxon>Euarchontoglires</taxon>
        <taxon>Glires</taxon>
        <taxon>Rodentia</taxon>
        <taxon>Myomorpha</taxon>
        <taxon>Muroidea</taxon>
        <taxon>Muridae</taxon>
        <taxon>Murinae</taxon>
        <taxon>Mus</taxon>
        <taxon>Mus</taxon>
    </lineage>
</organism>
<protein>
    <recommendedName>
        <fullName>StAR-related lipid transfer protein 9</fullName>
    </recommendedName>
    <alternativeName>
        <fullName>Kinesin-like protein Kif16a</fullName>
    </alternativeName>
    <alternativeName>
        <fullName>START domain-containing protein 9</fullName>
        <shortName>StARD9</shortName>
    </alternativeName>
</protein>
<gene>
    <name type="primary">Stard9</name>
    <name type="synonym">Kiaa1300</name>
    <name type="synonym">Kif16a</name>
</gene>
<accession>Q80TF6</accession>
<accession>O35058</accession>
<accession>Q8C121</accession>
<accession>Q8CFL0</accession>
<feature type="chain" id="PRO_0000415577" description="StAR-related lipid transfer protein 9">
    <location>
        <begin position="1"/>
        <end position="4561"/>
    </location>
</feature>
<feature type="domain" description="Kinesin motor" evidence="5">
    <location>
        <begin position="3"/>
        <end position="384"/>
    </location>
</feature>
<feature type="domain" description="FHA" evidence="3">
    <location>
        <begin position="482"/>
        <end position="533"/>
    </location>
</feature>
<feature type="domain" description="START" evidence="4">
    <location>
        <begin position="4344"/>
        <end position="4561"/>
    </location>
</feature>
<feature type="region of interest" description="Disordered" evidence="6">
    <location>
        <begin position="307"/>
        <end position="330"/>
    </location>
</feature>
<feature type="region of interest" description="Disordered" evidence="6">
    <location>
        <begin position="784"/>
        <end position="805"/>
    </location>
</feature>
<feature type="region of interest" description="Disordered" evidence="6">
    <location>
        <begin position="873"/>
        <end position="1064"/>
    </location>
</feature>
<feature type="region of interest" description="Disordered" evidence="6">
    <location>
        <begin position="1092"/>
        <end position="1153"/>
    </location>
</feature>
<feature type="region of interest" description="Disordered" evidence="6">
    <location>
        <begin position="1288"/>
        <end position="1392"/>
    </location>
</feature>
<feature type="region of interest" description="Disordered" evidence="6">
    <location>
        <begin position="1700"/>
        <end position="1767"/>
    </location>
</feature>
<feature type="region of interest" description="Disordered" evidence="6">
    <location>
        <begin position="1959"/>
        <end position="1980"/>
    </location>
</feature>
<feature type="region of interest" description="Disordered" evidence="6">
    <location>
        <begin position="2077"/>
        <end position="2120"/>
    </location>
</feature>
<feature type="region of interest" description="Disordered" evidence="6">
    <location>
        <begin position="2320"/>
        <end position="2356"/>
    </location>
</feature>
<feature type="region of interest" description="Disordered" evidence="6">
    <location>
        <begin position="2384"/>
        <end position="2427"/>
    </location>
</feature>
<feature type="region of interest" description="Disordered" evidence="6">
    <location>
        <begin position="2439"/>
        <end position="2467"/>
    </location>
</feature>
<feature type="region of interest" description="Disordered" evidence="6">
    <location>
        <begin position="2622"/>
        <end position="2656"/>
    </location>
</feature>
<feature type="region of interest" description="Disordered" evidence="6">
    <location>
        <begin position="2712"/>
        <end position="2735"/>
    </location>
</feature>
<feature type="region of interest" description="Disordered" evidence="6">
    <location>
        <begin position="2777"/>
        <end position="2800"/>
    </location>
</feature>
<feature type="region of interest" description="Disordered" evidence="6">
    <location>
        <begin position="3002"/>
        <end position="3067"/>
    </location>
</feature>
<feature type="region of interest" description="Disordered" evidence="6">
    <location>
        <begin position="3185"/>
        <end position="3207"/>
    </location>
</feature>
<feature type="region of interest" description="Disordered" evidence="6">
    <location>
        <begin position="3246"/>
        <end position="3286"/>
    </location>
</feature>
<feature type="region of interest" description="Disordered" evidence="6">
    <location>
        <begin position="3645"/>
        <end position="3703"/>
    </location>
</feature>
<feature type="region of interest" description="Disordered" evidence="6">
    <location>
        <begin position="3790"/>
        <end position="3847"/>
    </location>
</feature>
<feature type="region of interest" description="Disordered" evidence="6">
    <location>
        <begin position="3863"/>
        <end position="3913"/>
    </location>
</feature>
<feature type="coiled-coil region" evidence="2">
    <location>
        <begin position="2414"/>
        <end position="2463"/>
    </location>
</feature>
<feature type="coiled-coil region" evidence="2">
    <location>
        <begin position="4185"/>
        <end position="4224"/>
    </location>
</feature>
<feature type="compositionally biased region" description="Low complexity" evidence="6">
    <location>
        <begin position="307"/>
        <end position="321"/>
    </location>
</feature>
<feature type="compositionally biased region" description="Polar residues" evidence="6">
    <location>
        <begin position="789"/>
        <end position="805"/>
    </location>
</feature>
<feature type="compositionally biased region" description="Polar residues" evidence="6">
    <location>
        <begin position="884"/>
        <end position="903"/>
    </location>
</feature>
<feature type="compositionally biased region" description="Polar residues" evidence="6">
    <location>
        <begin position="911"/>
        <end position="920"/>
    </location>
</feature>
<feature type="compositionally biased region" description="Polar residues" evidence="6">
    <location>
        <begin position="939"/>
        <end position="948"/>
    </location>
</feature>
<feature type="compositionally biased region" description="Basic and acidic residues" evidence="6">
    <location>
        <begin position="1046"/>
        <end position="1060"/>
    </location>
</feature>
<feature type="compositionally biased region" description="Basic and acidic residues" evidence="6">
    <location>
        <begin position="1124"/>
        <end position="1135"/>
    </location>
</feature>
<feature type="compositionally biased region" description="Basic and acidic residues" evidence="6">
    <location>
        <begin position="1300"/>
        <end position="1321"/>
    </location>
</feature>
<feature type="compositionally biased region" description="Polar residues" evidence="6">
    <location>
        <begin position="1328"/>
        <end position="1360"/>
    </location>
</feature>
<feature type="compositionally biased region" description="Polar residues" evidence="6">
    <location>
        <begin position="1722"/>
        <end position="1741"/>
    </location>
</feature>
<feature type="compositionally biased region" description="Basic and acidic residues" evidence="6">
    <location>
        <begin position="1754"/>
        <end position="1767"/>
    </location>
</feature>
<feature type="compositionally biased region" description="Basic and acidic residues" evidence="6">
    <location>
        <begin position="1970"/>
        <end position="1980"/>
    </location>
</feature>
<feature type="compositionally biased region" description="Polar residues" evidence="6">
    <location>
        <begin position="2077"/>
        <end position="2091"/>
    </location>
</feature>
<feature type="compositionally biased region" description="Basic and acidic residues" evidence="6">
    <location>
        <begin position="2096"/>
        <end position="2110"/>
    </location>
</feature>
<feature type="compositionally biased region" description="Polar residues" evidence="6">
    <location>
        <begin position="2333"/>
        <end position="2351"/>
    </location>
</feature>
<feature type="compositionally biased region" description="Polar residues" evidence="6">
    <location>
        <begin position="2399"/>
        <end position="2408"/>
    </location>
</feature>
<feature type="compositionally biased region" description="Basic and acidic residues" evidence="6">
    <location>
        <begin position="2417"/>
        <end position="2427"/>
    </location>
</feature>
<feature type="compositionally biased region" description="Basic and acidic residues" evidence="6">
    <location>
        <begin position="2634"/>
        <end position="2647"/>
    </location>
</feature>
<feature type="compositionally biased region" description="Polar residues" evidence="6">
    <location>
        <begin position="3039"/>
        <end position="3054"/>
    </location>
</feature>
<feature type="compositionally biased region" description="Polar residues" evidence="6">
    <location>
        <begin position="3187"/>
        <end position="3199"/>
    </location>
</feature>
<feature type="compositionally biased region" description="Pro residues" evidence="6">
    <location>
        <begin position="3689"/>
        <end position="3700"/>
    </location>
</feature>
<feature type="compositionally biased region" description="Basic and acidic residues" evidence="6">
    <location>
        <begin position="3812"/>
        <end position="3835"/>
    </location>
</feature>
<feature type="compositionally biased region" description="Polar residues" evidence="6">
    <location>
        <begin position="3863"/>
        <end position="3874"/>
    </location>
</feature>
<feature type="binding site" evidence="5">
    <location>
        <begin position="103"/>
        <end position="110"/>
    </location>
    <ligand>
        <name>ATP</name>
        <dbReference type="ChEBI" id="CHEBI:30616"/>
    </ligand>
</feature>
<feature type="modified residue" description="Phosphoserine" evidence="8">
    <location>
        <position position="1164"/>
    </location>
</feature>
<feature type="sequence conflict" description="In Ref. 2; BAA22385." evidence="7" ref="2">
    <original>L</original>
    <variation>I</variation>
    <location>
        <position position="99"/>
    </location>
</feature>
<feature type="sequence conflict" description="In Ref. 2; BAA22385." evidence="7" ref="2">
    <original>Q</original>
    <variation>R</variation>
    <location>
        <position position="140"/>
    </location>
</feature>
<feature type="sequence conflict" description="In Ref. 2; BAA22385." evidence="7" ref="2">
    <original>N</original>
    <variation>K</variation>
    <location>
        <position position="166"/>
    </location>
</feature>
<feature type="sequence conflict" description="In Ref. 2; BAA22385." evidence="7" ref="2">
    <original>Q</original>
    <variation>H</variation>
    <location>
        <position position="197"/>
    </location>
</feature>
<feature type="sequence conflict" description="In Ref. 3; BAC65771." evidence="7" ref="3">
    <original>Y</original>
    <variation>C</variation>
    <location>
        <position position="3164"/>
    </location>
</feature>
<feature type="sequence conflict" description="In Ref. 3; BAC65771." evidence="7" ref="3">
    <original>Y</original>
    <variation>H</variation>
    <location>
        <position position="3275"/>
    </location>
</feature>
<feature type="sequence conflict" description="In Ref. 3; BAC65771." evidence="7" ref="3">
    <original>I</original>
    <variation>V</variation>
    <location>
        <position position="3281"/>
    </location>
</feature>
<feature type="sequence conflict" description="In Ref. 3; BAC65771." evidence="7" ref="3">
    <original>G</original>
    <variation>D</variation>
    <location>
        <position position="3336"/>
    </location>
</feature>
<feature type="sequence conflict" description="In Ref. 3; BAC65771." evidence="7" ref="3">
    <original>E</original>
    <variation>K</variation>
    <location>
        <position position="3364"/>
    </location>
</feature>
<feature type="sequence conflict" description="In Ref. 3; BAC65771." evidence="7" ref="3">
    <original>L</original>
    <variation>P</variation>
    <location>
        <position position="3386"/>
    </location>
</feature>
<feature type="sequence conflict" description="In Ref. 3; BAC65771." evidence="7" ref="3">
    <original>I</original>
    <variation>M</variation>
    <location>
        <position position="3422"/>
    </location>
</feature>
<feature type="sequence conflict" description="In Ref. 3; BAC65771." evidence="7" ref="3">
    <original>L</original>
    <variation>I</variation>
    <location>
        <position position="3426"/>
    </location>
</feature>
<feature type="sequence conflict" description="In Ref. 3; BAC65771." evidence="7" ref="3">
    <original>SDV</original>
    <variation>CDI</variation>
    <location>
        <begin position="3451"/>
        <end position="3453"/>
    </location>
</feature>
<feature type="sequence conflict" description="In Ref. 3; BAC65771." evidence="7" ref="3">
    <original>V</original>
    <variation>A</variation>
    <location>
        <position position="3465"/>
    </location>
</feature>
<feature type="sequence conflict" description="In Ref. 3; BAC65771." evidence="7" ref="3">
    <original>A</original>
    <variation>T</variation>
    <location>
        <position position="3471"/>
    </location>
</feature>
<feature type="sequence conflict" description="In Ref. 3; BAC65771." evidence="7" ref="3">
    <original>M</original>
    <variation>T</variation>
    <location>
        <position position="3484"/>
    </location>
</feature>
<feature type="sequence conflict" description="In Ref. 3; BAC65771." evidence="7" ref="3">
    <original>T</original>
    <variation>S</variation>
    <location>
        <position position="3512"/>
    </location>
</feature>
<feature type="sequence conflict" description="In Ref. 3; BAC65771." evidence="7" ref="3">
    <original>S</original>
    <variation>L</variation>
    <location>
        <position position="3586"/>
    </location>
</feature>
<feature type="sequence conflict" description="In Ref. 3; BAC65771." evidence="7" ref="3">
    <original>M</original>
    <variation>V</variation>
    <location>
        <position position="3620"/>
    </location>
</feature>
<feature type="sequence conflict" description="In Ref. 3; BAC65771." evidence="7" ref="3">
    <original>P</original>
    <variation>T</variation>
    <location>
        <position position="3636"/>
    </location>
</feature>
<feature type="sequence conflict" description="In Ref. 3; BAC65771." evidence="7" ref="3">
    <original>R</original>
    <variation>S</variation>
    <location>
        <position position="3741"/>
    </location>
</feature>
<feature type="sequence conflict" description="In Ref. 3; BAC65771." evidence="7" ref="3">
    <original>R</original>
    <variation>G</variation>
    <location>
        <position position="3798"/>
    </location>
</feature>
<feature type="sequence conflict" description="In Ref. 3; BAC65771." evidence="7" ref="3">
    <original>Q</original>
    <variation>K</variation>
    <location>
        <position position="3805"/>
    </location>
</feature>
<feature type="sequence conflict" description="In Ref. 3; BAC65771." evidence="7" ref="3">
    <original>N</original>
    <variation>T</variation>
    <location>
        <position position="3838"/>
    </location>
</feature>
<feature type="sequence conflict" description="In Ref. 3; BAC65771." evidence="7" ref="3">
    <original>S</original>
    <variation>P</variation>
    <location>
        <position position="3841"/>
    </location>
</feature>
<feature type="sequence conflict" description="In Ref. 3; BAC65771." evidence="7" ref="3">
    <original>S</original>
    <variation>N</variation>
    <location>
        <position position="3847"/>
    </location>
</feature>
<feature type="sequence conflict" description="In Ref. 3; BAC65771." evidence="7" ref="3">
    <original>I</original>
    <variation>T</variation>
    <location>
        <position position="3857"/>
    </location>
</feature>
<feature type="sequence conflict" description="In Ref. 3; BAC65771." evidence="7" ref="3">
    <original>T</original>
    <variation>A</variation>
    <location>
        <position position="3896"/>
    </location>
</feature>
<feature type="sequence conflict" description="In Ref. 3; BAC65771." evidence="7" ref="3">
    <original>H</original>
    <variation>Y</variation>
    <location>
        <position position="3900"/>
    </location>
</feature>
<feature type="sequence conflict" description="In Ref. 3; BAC65771." evidence="7" ref="3">
    <original>HPV</original>
    <variation>RPM</variation>
    <location>
        <begin position="3964"/>
        <end position="3966"/>
    </location>
</feature>
<feature type="sequence conflict" description="In Ref. 3; BAC65771." evidence="7" ref="3">
    <original>R</original>
    <variation>G</variation>
    <location>
        <position position="4007"/>
    </location>
</feature>
<feature type="sequence conflict" description="In Ref. 3; BAC65771." evidence="7" ref="3">
    <original>E</original>
    <variation>V</variation>
    <location>
        <position position="4011"/>
    </location>
</feature>
<feature type="sequence conflict" description="In Ref. 3; BAC65771." evidence="7" ref="3">
    <original>P</original>
    <variation>L</variation>
    <location>
        <position position="4030"/>
    </location>
</feature>
<feature type="sequence conflict" description="In Ref. 4; BAC26335." evidence="7" ref="4">
    <original>E</original>
    <variation>G</variation>
    <location>
        <position position="4149"/>
    </location>
</feature>
<feature type="sequence conflict" description="In Ref. 4; BAC26335." evidence="7" ref="4">
    <original>E</original>
    <variation>G</variation>
    <location>
        <position position="4175"/>
    </location>
</feature>
<feature type="sequence conflict" description="In Ref. 3; BAC65771." evidence="7" ref="3">
    <original>Q</original>
    <variation>R</variation>
    <location>
        <position position="4296"/>
    </location>
</feature>
<feature type="sequence conflict" description="In Ref. 3; BAC65771." evidence="7" ref="3">
    <original>N</original>
    <variation>D</variation>
    <location>
        <position position="4454"/>
    </location>
</feature>
<dbReference type="EMBL" id="AL772299">
    <property type="status" value="NOT_ANNOTATED_CDS"/>
    <property type="molecule type" value="Genomic_DNA"/>
</dbReference>
<dbReference type="EMBL" id="AL935168">
    <property type="status" value="NOT_ANNOTATED_CDS"/>
    <property type="molecule type" value="Genomic_DNA"/>
</dbReference>
<dbReference type="EMBL" id="AB001425">
    <property type="protein sequence ID" value="BAA22385.1"/>
    <property type="molecule type" value="mRNA"/>
</dbReference>
<dbReference type="EMBL" id="AK122489">
    <property type="protein sequence ID" value="BAC65771.1"/>
    <property type="molecule type" value="mRNA"/>
</dbReference>
<dbReference type="EMBL" id="AK029170">
    <property type="protein sequence ID" value="BAC26335.1"/>
    <property type="molecule type" value="mRNA"/>
</dbReference>
<dbReference type="EMBL" id="BC032885">
    <property type="protein sequence ID" value="AAH32885.1"/>
    <property type="molecule type" value="mRNA"/>
</dbReference>
<dbReference type="SMR" id="Q80TF6"/>
<dbReference type="FunCoup" id="Q80TF6">
    <property type="interactions" value="980"/>
</dbReference>
<dbReference type="STRING" id="10090.ENSMUSP00000136055"/>
<dbReference type="GlyGen" id="Q80TF6">
    <property type="glycosylation" value="5 sites, 1 O-linked glycan (1 site)"/>
</dbReference>
<dbReference type="iPTMnet" id="Q80TF6"/>
<dbReference type="PhosphoSitePlus" id="Q80TF6"/>
<dbReference type="jPOST" id="Q80TF6"/>
<dbReference type="PeptideAtlas" id="Q80TF6"/>
<dbReference type="ProteomicsDB" id="257367"/>
<dbReference type="Ensembl" id="ENSMUST00000180041.9">
    <property type="protein sequence ID" value="ENSMUSP00000136055.2"/>
    <property type="gene ID" value="ENSMUSG00000033705.18"/>
</dbReference>
<dbReference type="AGR" id="MGI:3045258"/>
<dbReference type="MGI" id="MGI:3045258">
    <property type="gene designation" value="Stard9"/>
</dbReference>
<dbReference type="VEuPathDB" id="HostDB:ENSMUSG00000033705"/>
<dbReference type="GeneTree" id="ENSGT00940000163117"/>
<dbReference type="HOGENOM" id="CLU_223684_0_0_1"/>
<dbReference type="InParanoid" id="Q80TF6"/>
<dbReference type="OrthoDB" id="3176171at2759"/>
<dbReference type="TreeFam" id="TF332626"/>
<dbReference type="ChiTaRS" id="Stard9">
    <property type="organism name" value="mouse"/>
</dbReference>
<dbReference type="PRO" id="PR:Q80TF6"/>
<dbReference type="Proteomes" id="UP000000589">
    <property type="component" value="Chromosome 2"/>
</dbReference>
<dbReference type="RNAct" id="Q80TF6">
    <property type="molecule type" value="protein"/>
</dbReference>
<dbReference type="Bgee" id="ENSMUSG00000033705">
    <property type="expression patterns" value="Expressed in humerus cartilage element and 187 other cell types or tissues"/>
</dbReference>
<dbReference type="ExpressionAtlas" id="Q80TF6">
    <property type="expression patterns" value="baseline and differential"/>
</dbReference>
<dbReference type="GO" id="GO:0005814">
    <property type="term" value="C:centriole"/>
    <property type="evidence" value="ECO:0000250"/>
    <property type="project" value="UniProtKB"/>
</dbReference>
<dbReference type="GO" id="GO:0005737">
    <property type="term" value="C:cytoplasm"/>
    <property type="evidence" value="ECO:0000250"/>
    <property type="project" value="UniProtKB"/>
</dbReference>
<dbReference type="GO" id="GO:0005634">
    <property type="term" value="C:nucleus"/>
    <property type="evidence" value="ECO:0000250"/>
    <property type="project" value="UniProtKB"/>
</dbReference>
<dbReference type="GO" id="GO:0005524">
    <property type="term" value="F:ATP binding"/>
    <property type="evidence" value="ECO:0007669"/>
    <property type="project" value="UniProtKB-KW"/>
</dbReference>
<dbReference type="GO" id="GO:0008289">
    <property type="term" value="F:lipid binding"/>
    <property type="evidence" value="ECO:0007669"/>
    <property type="project" value="InterPro"/>
</dbReference>
<dbReference type="GO" id="GO:0008017">
    <property type="term" value="F:microtubule binding"/>
    <property type="evidence" value="ECO:0000250"/>
    <property type="project" value="UniProtKB"/>
</dbReference>
<dbReference type="GO" id="GO:0003777">
    <property type="term" value="F:microtubule motor activity"/>
    <property type="evidence" value="ECO:0000250"/>
    <property type="project" value="UniProtKB"/>
</dbReference>
<dbReference type="GO" id="GO:0007018">
    <property type="term" value="P:microtubule-based movement"/>
    <property type="evidence" value="ECO:0007669"/>
    <property type="project" value="InterPro"/>
</dbReference>
<dbReference type="GO" id="GO:0051225">
    <property type="term" value="P:spindle assembly"/>
    <property type="evidence" value="ECO:0000250"/>
    <property type="project" value="UniProtKB"/>
</dbReference>
<dbReference type="CDD" id="cd22731">
    <property type="entry name" value="FHA_KIF16A_STARD9"/>
    <property type="match status" value="1"/>
</dbReference>
<dbReference type="CDD" id="cd01365">
    <property type="entry name" value="KISc_KIF1A_KIF1B"/>
    <property type="match status" value="1"/>
</dbReference>
<dbReference type="FunFam" id="2.60.200.20:FF:000005">
    <property type="entry name" value="Kinesin family member 16B"/>
    <property type="match status" value="1"/>
</dbReference>
<dbReference type="FunFam" id="3.40.850.10:FF:000021">
    <property type="entry name" value="kinesin-like protein KIF16B isoform X1"/>
    <property type="match status" value="1"/>
</dbReference>
<dbReference type="FunFam" id="3.30.530.20:FF:000022">
    <property type="entry name" value="StAR-related lipid transfer (START) domain-containing 9"/>
    <property type="match status" value="1"/>
</dbReference>
<dbReference type="Gene3D" id="2.60.200.20">
    <property type="match status" value="1"/>
</dbReference>
<dbReference type="Gene3D" id="3.30.530.20">
    <property type="match status" value="1"/>
</dbReference>
<dbReference type="Gene3D" id="3.40.850.10">
    <property type="entry name" value="Kinesin motor domain"/>
    <property type="match status" value="1"/>
</dbReference>
<dbReference type="InterPro" id="IPR000253">
    <property type="entry name" value="FHA_dom"/>
</dbReference>
<dbReference type="InterPro" id="IPR019821">
    <property type="entry name" value="Kinesin_motor_CS"/>
</dbReference>
<dbReference type="InterPro" id="IPR001752">
    <property type="entry name" value="Kinesin_motor_dom"/>
</dbReference>
<dbReference type="InterPro" id="IPR036961">
    <property type="entry name" value="Kinesin_motor_dom_sf"/>
</dbReference>
<dbReference type="InterPro" id="IPR027417">
    <property type="entry name" value="P-loop_NTPase"/>
</dbReference>
<dbReference type="InterPro" id="IPR008984">
    <property type="entry name" value="SMAD_FHA_dom_sf"/>
</dbReference>
<dbReference type="InterPro" id="IPR023393">
    <property type="entry name" value="START-like_dom_sf"/>
</dbReference>
<dbReference type="InterPro" id="IPR002913">
    <property type="entry name" value="START_lipid-bd_dom"/>
</dbReference>
<dbReference type="PANTHER" id="PTHR47117">
    <property type="entry name" value="STAR-RELATED LIPID TRANSFER PROTEIN 9"/>
    <property type="match status" value="1"/>
</dbReference>
<dbReference type="PANTHER" id="PTHR47117:SF1">
    <property type="entry name" value="STAR-RELATED LIPID TRANSFER PROTEIN 9"/>
    <property type="match status" value="1"/>
</dbReference>
<dbReference type="Pfam" id="PF00498">
    <property type="entry name" value="FHA"/>
    <property type="match status" value="1"/>
</dbReference>
<dbReference type="Pfam" id="PF00225">
    <property type="entry name" value="Kinesin"/>
    <property type="match status" value="1"/>
</dbReference>
<dbReference type="PRINTS" id="PR00380">
    <property type="entry name" value="KINESINHEAVY"/>
</dbReference>
<dbReference type="SMART" id="SM00240">
    <property type="entry name" value="FHA"/>
    <property type="match status" value="1"/>
</dbReference>
<dbReference type="SMART" id="SM00129">
    <property type="entry name" value="KISc"/>
    <property type="match status" value="1"/>
</dbReference>
<dbReference type="SUPFAM" id="SSF55961">
    <property type="entry name" value="Bet v1-like"/>
    <property type="match status" value="1"/>
</dbReference>
<dbReference type="SUPFAM" id="SSF52540">
    <property type="entry name" value="P-loop containing nucleoside triphosphate hydrolases"/>
    <property type="match status" value="1"/>
</dbReference>
<dbReference type="SUPFAM" id="SSF49879">
    <property type="entry name" value="SMAD/FHA domain"/>
    <property type="match status" value="1"/>
</dbReference>
<dbReference type="PROSITE" id="PS50006">
    <property type="entry name" value="FHA_DOMAIN"/>
    <property type="match status" value="1"/>
</dbReference>
<dbReference type="PROSITE" id="PS00411">
    <property type="entry name" value="KINESIN_MOTOR_1"/>
    <property type="match status" value="1"/>
</dbReference>
<dbReference type="PROSITE" id="PS50067">
    <property type="entry name" value="KINESIN_MOTOR_2"/>
    <property type="match status" value="1"/>
</dbReference>
<dbReference type="PROSITE" id="PS50848">
    <property type="entry name" value="START"/>
    <property type="match status" value="1"/>
</dbReference>